<feature type="initiator methionine" description="Removed" evidence="2">
    <location>
        <position position="1"/>
    </location>
</feature>
<feature type="chain" id="PRO_0000119366" description="A-type ATP synthase subunit C">
    <location>
        <begin position="2"/>
        <end position="399"/>
    </location>
</feature>
<reference key="1">
    <citation type="journal article" date="1996" name="Science">
        <title>Complete genome sequence of the methanogenic archaeon, Methanococcus jannaschii.</title>
        <authorList>
            <person name="Bult C.J."/>
            <person name="White O."/>
            <person name="Olsen G.J."/>
            <person name="Zhou L."/>
            <person name="Fleischmann R.D."/>
            <person name="Sutton G.G."/>
            <person name="Blake J.A."/>
            <person name="FitzGerald L.M."/>
            <person name="Clayton R.A."/>
            <person name="Gocayne J.D."/>
            <person name="Kerlavage A.R."/>
            <person name="Dougherty B.A."/>
            <person name="Tomb J.-F."/>
            <person name="Adams M.D."/>
            <person name="Reich C.I."/>
            <person name="Overbeek R."/>
            <person name="Kirkness E.F."/>
            <person name="Weinstock K.G."/>
            <person name="Merrick J.M."/>
            <person name="Glodek A."/>
            <person name="Scott J.L."/>
            <person name="Geoghagen N.S.M."/>
            <person name="Weidman J.F."/>
            <person name="Fuhrmann J.L."/>
            <person name="Nguyen D."/>
            <person name="Utterback T.R."/>
            <person name="Kelley J.M."/>
            <person name="Peterson J.D."/>
            <person name="Sadow P.W."/>
            <person name="Hanna M.C."/>
            <person name="Cotton M.D."/>
            <person name="Roberts K.M."/>
            <person name="Hurst M.A."/>
            <person name="Kaine B.P."/>
            <person name="Borodovsky M."/>
            <person name="Klenk H.-P."/>
            <person name="Fraser C.M."/>
            <person name="Smith H.O."/>
            <person name="Woese C.R."/>
            <person name="Venter J.C."/>
        </authorList>
    </citation>
    <scope>NUCLEOTIDE SEQUENCE [LARGE SCALE GENOMIC DNA]</scope>
    <source>
        <strain>ATCC 43067 / DSM 2661 / JAL-1 / JCM 10045 / NBRC 100440</strain>
    </source>
</reference>
<reference key="2">
    <citation type="journal article" date="2003" name="Extremophiles">
        <title>Isolation of a complete A1AO ATP synthase comprising nine subunits from the hyperthermophile Methanococcus jannaschii.</title>
        <authorList>
            <person name="Lingl A."/>
            <person name="Huber H."/>
            <person name="Stetter K.O."/>
            <person name="Mayer F."/>
            <person name="Kellermann J."/>
            <person name="Mueller V."/>
        </authorList>
    </citation>
    <scope>PROTEIN SEQUENCE OF 2-10</scope>
    <scope>FUNCTION</scope>
    <scope>BIOPHYSICOCHEMICAL PROPERTIES</scope>
    <scope>SUBUNIT</scope>
    <scope>SUBCELLULAR LOCATION</scope>
    <scope>DOMAIN</scope>
    <source>
        <strain>ATCC 43067 / DSM 2661 / JAL-1 / JCM 10045 / NBRC 100440</strain>
    </source>
</reference>
<reference key="3">
    <citation type="journal article" date="2004" name="J. Biol. Chem.">
        <title>Structure and subunit arrangement of the A-type ATP synthase complex from the archaeon Methanococcus jannaschii visualized by electron microscopy.</title>
        <authorList>
            <person name="Coskun U."/>
            <person name="Chaban Y.L."/>
            <person name="Lingl A."/>
            <person name="Mueller V."/>
            <person name="Keegstra W."/>
            <person name="Boekema E.J."/>
            <person name="Grueber G."/>
        </authorList>
    </citation>
    <scope>STRUCTURE BY ELECTRON MICROSCOPY (18 ANGSTROMS) OF A-TYPE ATP SYNTHASE</scope>
    <scope>SUBUNIT</scope>
    <scope>SUBCELLULAR LOCATION</scope>
    <scope>DOMAIN</scope>
    <source>
        <strain>ATCC 43067 / DSM 2661 / JAL-1 / JCM 10045 / NBRC 100440</strain>
    </source>
</reference>
<dbReference type="EMBL" id="L77117">
    <property type="protein sequence ID" value="AAB98202.1"/>
    <property type="molecule type" value="Genomic_DNA"/>
</dbReference>
<dbReference type="PIR" id="D64327">
    <property type="entry name" value="D64327"/>
</dbReference>
<dbReference type="RefSeq" id="WP_010869715.1">
    <property type="nucleotide sequence ID" value="NC_000909.1"/>
</dbReference>
<dbReference type="SMR" id="Q57672"/>
<dbReference type="FunCoup" id="Q57672">
    <property type="interactions" value="1"/>
</dbReference>
<dbReference type="STRING" id="243232.MJ_0219"/>
<dbReference type="PaxDb" id="243232-MJ_0219"/>
<dbReference type="EnsemblBacteria" id="AAB98202">
    <property type="protein sequence ID" value="AAB98202"/>
    <property type="gene ID" value="MJ_0219"/>
</dbReference>
<dbReference type="GeneID" id="1451069"/>
<dbReference type="KEGG" id="mja:MJ_0219"/>
<dbReference type="eggNOG" id="arCOG02459">
    <property type="taxonomic scope" value="Archaea"/>
</dbReference>
<dbReference type="HOGENOM" id="CLU_059311_0_0_2"/>
<dbReference type="InParanoid" id="Q57672"/>
<dbReference type="PhylomeDB" id="Q57672"/>
<dbReference type="Proteomes" id="UP000000805">
    <property type="component" value="Chromosome"/>
</dbReference>
<dbReference type="GO" id="GO:0005886">
    <property type="term" value="C:plasma membrane"/>
    <property type="evidence" value="ECO:0007669"/>
    <property type="project" value="UniProtKB-SubCell"/>
</dbReference>
<dbReference type="GO" id="GO:0033179">
    <property type="term" value="C:proton-transporting V-type ATPase, V0 domain"/>
    <property type="evidence" value="ECO:0007669"/>
    <property type="project" value="InterPro"/>
</dbReference>
<dbReference type="GO" id="GO:0005524">
    <property type="term" value="F:ATP binding"/>
    <property type="evidence" value="ECO:0007669"/>
    <property type="project" value="UniProtKB-UniRule"/>
</dbReference>
<dbReference type="GO" id="GO:0046933">
    <property type="term" value="F:proton-transporting ATP synthase activity, rotational mechanism"/>
    <property type="evidence" value="ECO:0007669"/>
    <property type="project" value="UniProtKB-UniRule"/>
</dbReference>
<dbReference type="GO" id="GO:0046961">
    <property type="term" value="F:proton-transporting ATPase activity, rotational mechanism"/>
    <property type="evidence" value="ECO:0007669"/>
    <property type="project" value="InterPro"/>
</dbReference>
<dbReference type="GO" id="GO:0042777">
    <property type="term" value="P:proton motive force-driven plasma membrane ATP synthesis"/>
    <property type="evidence" value="ECO:0007669"/>
    <property type="project" value="UniProtKB-UniRule"/>
</dbReference>
<dbReference type="Gene3D" id="1.10.132.50">
    <property type="entry name" value="ATP synthase (C/AC39) subunit, domain 3"/>
    <property type="match status" value="1"/>
</dbReference>
<dbReference type="Gene3D" id="1.20.1690.10">
    <property type="entry name" value="V-type ATP synthase subunit C domain"/>
    <property type="match status" value="2"/>
</dbReference>
<dbReference type="HAMAP" id="MF_00314">
    <property type="entry name" value="ATP_synth_C_arch"/>
    <property type="match status" value="1"/>
</dbReference>
<dbReference type="InterPro" id="IPR036079">
    <property type="entry name" value="ATPase_csu/dsu_sf"/>
</dbReference>
<dbReference type="InterPro" id="IPR014272">
    <property type="entry name" value="ATPase_V0-cplx_csu"/>
</dbReference>
<dbReference type="InterPro" id="IPR002843">
    <property type="entry name" value="ATPase_V0-cplx_csu/dsu"/>
</dbReference>
<dbReference type="InterPro" id="IPR050873">
    <property type="entry name" value="V-ATPase_V0D/AC39_subunit"/>
</dbReference>
<dbReference type="InterPro" id="IPR035067">
    <property type="entry name" value="V-type_ATPase_csu/dsu"/>
</dbReference>
<dbReference type="InterPro" id="IPR044911">
    <property type="entry name" value="V-type_ATPase_csu/dsu_dom_3"/>
</dbReference>
<dbReference type="NCBIfam" id="TIGR02923">
    <property type="entry name" value="AhaC"/>
    <property type="match status" value="1"/>
</dbReference>
<dbReference type="NCBIfam" id="NF002267">
    <property type="entry name" value="PRK01198.1-3"/>
    <property type="match status" value="1"/>
</dbReference>
<dbReference type="PANTHER" id="PTHR38682">
    <property type="entry name" value="V-TYPE ATP SYNTHASE SUBUNIT C"/>
    <property type="match status" value="1"/>
</dbReference>
<dbReference type="PANTHER" id="PTHR38682:SF1">
    <property type="entry name" value="V-TYPE ATP SYNTHASE SUBUNIT C"/>
    <property type="match status" value="1"/>
</dbReference>
<dbReference type="Pfam" id="PF01992">
    <property type="entry name" value="vATP-synt_AC39"/>
    <property type="match status" value="1"/>
</dbReference>
<dbReference type="SUPFAM" id="SSF103486">
    <property type="entry name" value="V-type ATP synthase subunit C"/>
    <property type="match status" value="1"/>
</dbReference>
<organism>
    <name type="scientific">Methanocaldococcus jannaschii (strain ATCC 43067 / DSM 2661 / JAL-1 / JCM 10045 / NBRC 100440)</name>
    <name type="common">Methanococcus jannaschii</name>
    <dbReference type="NCBI Taxonomy" id="243232"/>
    <lineage>
        <taxon>Archaea</taxon>
        <taxon>Methanobacteriati</taxon>
        <taxon>Methanobacteriota</taxon>
        <taxon>Methanomada group</taxon>
        <taxon>Methanococci</taxon>
        <taxon>Methanococcales</taxon>
        <taxon>Methanocaldococcaceae</taxon>
        <taxon>Methanocaldococcus</taxon>
    </lineage>
</organism>
<sequence>MAMDIETLLDLEKLYSAIMTYFDNPLTLLIVVATIIIVLIVIVWITKMVIDLAPYAYVNARIRSKEAKLFDDAKLNELIESGSLEELVGLLEDTDYGQYVIEVMNELKDPVAVEKALDMYLADLYGLIYRISPDSAKKVLKVFAKKFDIKNIKTLIRAKFVGLSAEETYALLIPLGNIPVEKLKELAEVKTVEEVVRGLDGTEYFKILQEELSNYDQTSNIIGFELALDKYYLESLRKTIMTEGKEEDIFREFVGTIIDVENLKVILKGKADGLSAEELSKYVTLTGYELADWKLKDLMSAGGIEGVLSGLEGTSYAEVLAEAMEEYEKTKSIYAFEKALDKFVLEKGKKLSTRKPFGVGPIIGLIVSKELEVKNLKAIIKGKIENLKPEEIRSLLISL</sequence>
<name>AATC_METJA</name>
<comment type="function">
    <text evidence="1 6">Component of the A-type ATP synthase that produces ATP from ADP in the presence of a proton gradient across the membrane.</text>
</comment>
<comment type="biophysicochemical properties">
    <phDependence>
        <text evidence="2">Optimum pH is 6.0 for ATP hydrolysis.</text>
    </phDependence>
    <temperatureDependence>
        <text evidence="2">Optimum temperature is 80 degrees Celsius.</text>
    </temperatureDependence>
</comment>
<comment type="subunit">
    <text evidence="2 3">The A-type ATPase is composed of subunits A(3), B(3), C, D, E(1 or 2), F, H(2), I and K(x) (PubMed:12768457, PubMed:15220347).</text>
</comment>
<comment type="subcellular location">
    <subcellularLocation>
        <location evidence="1 2 3">Cell membrane</location>
        <topology evidence="1 2 3">Peripheral membrane protein</topology>
    </subcellularLocation>
</comment>
<comment type="domain">
    <text evidence="2 3">Purified ATP synthase is 25.9 nm long. The hydrophilic A1 domain is 9.4 X 11.5 nm, the central stalk is 8.0 X 3.9 nm and the membrane-bound A0 domain is 6.4 X 10.6 nm; the domains are connected by two stalks. ATP is synthesized or hydrolyzed by the A1 domain while ion translocation occurs via the A0 domain.</text>
</comment>
<comment type="similarity">
    <text evidence="1">Belongs to the V-ATPase V0D/AC39 subunit family.</text>
</comment>
<gene>
    <name evidence="1 5" type="primary">atpC</name>
    <name type="ordered locus">MJ0219</name>
</gene>
<keyword id="KW-0066">ATP synthesis</keyword>
<keyword id="KW-1003">Cell membrane</keyword>
<keyword id="KW-0903">Direct protein sequencing</keyword>
<keyword id="KW-0375">Hydrogen ion transport</keyword>
<keyword id="KW-0406">Ion transport</keyword>
<keyword id="KW-0472">Membrane</keyword>
<keyword id="KW-1185">Reference proteome</keyword>
<keyword id="KW-0813">Transport</keyword>
<proteinExistence type="evidence at protein level"/>
<accession>Q57672</accession>
<evidence type="ECO:0000255" key="1">
    <source>
        <dbReference type="HAMAP-Rule" id="MF_00314"/>
    </source>
</evidence>
<evidence type="ECO:0000269" key="2">
    <source>
    </source>
</evidence>
<evidence type="ECO:0000269" key="3">
    <source>
    </source>
</evidence>
<evidence type="ECO:0000303" key="4">
    <source>
    </source>
</evidence>
<evidence type="ECO:0000303" key="5">
    <source>
    </source>
</evidence>
<evidence type="ECO:0000305" key="6">
    <source>
    </source>
</evidence>
<protein>
    <recommendedName>
        <fullName evidence="1">A-type ATP synthase subunit C</fullName>
    </recommendedName>
    <alternativeName>
        <fullName evidence="4">A1A0-type ATP synthase subunit C</fullName>
    </alternativeName>
</protein>